<protein>
    <recommendedName>
        <fullName evidence="1">UPF0301 protein IL2218</fullName>
    </recommendedName>
</protein>
<organism>
    <name type="scientific">Idiomarina loihiensis (strain ATCC BAA-735 / DSM 15497 / L2-TR)</name>
    <dbReference type="NCBI Taxonomy" id="283942"/>
    <lineage>
        <taxon>Bacteria</taxon>
        <taxon>Pseudomonadati</taxon>
        <taxon>Pseudomonadota</taxon>
        <taxon>Gammaproteobacteria</taxon>
        <taxon>Alteromonadales</taxon>
        <taxon>Idiomarinaceae</taxon>
        <taxon>Idiomarina</taxon>
    </lineage>
</organism>
<keyword id="KW-1185">Reference proteome</keyword>
<evidence type="ECO:0000255" key="1">
    <source>
        <dbReference type="HAMAP-Rule" id="MF_00758"/>
    </source>
</evidence>
<accession>Q5QVM4</accession>
<gene>
    <name type="ordered locus">IL2218</name>
</gene>
<feature type="chain" id="PRO_0000258832" description="UPF0301 protein IL2218">
    <location>
        <begin position="1"/>
        <end position="185"/>
    </location>
</feature>
<sequence>MNSLQNHLLIATPMLNDPMFKRTVTYICEHNEEGAMGLVINQPADLSVTSLLDKLEIVYPENNQHLQGSVYQGGPVGRERGFVIHPPQDNWRASQKMSDDIMVTTSRDILEALGSSAAPPQFLLTLGYAGWEAGQLEEELGENSWLAIPADPELLFNTPPSERWQKATEQLGFDVWQLGPDVGHA</sequence>
<proteinExistence type="inferred from homology"/>
<comment type="similarity">
    <text evidence="1">Belongs to the UPF0301 (AlgH) family.</text>
</comment>
<dbReference type="EMBL" id="AE017340">
    <property type="protein sequence ID" value="AAV83050.1"/>
    <property type="molecule type" value="Genomic_DNA"/>
</dbReference>
<dbReference type="RefSeq" id="WP_011235445.1">
    <property type="nucleotide sequence ID" value="NC_006512.1"/>
</dbReference>
<dbReference type="SMR" id="Q5QVM4"/>
<dbReference type="STRING" id="283942.IL2218"/>
<dbReference type="GeneID" id="41337407"/>
<dbReference type="KEGG" id="ilo:IL2218"/>
<dbReference type="eggNOG" id="COG1678">
    <property type="taxonomic scope" value="Bacteria"/>
</dbReference>
<dbReference type="HOGENOM" id="CLU_057596_1_0_6"/>
<dbReference type="OrthoDB" id="9807486at2"/>
<dbReference type="Proteomes" id="UP000001171">
    <property type="component" value="Chromosome"/>
</dbReference>
<dbReference type="GO" id="GO:0005829">
    <property type="term" value="C:cytosol"/>
    <property type="evidence" value="ECO:0007669"/>
    <property type="project" value="TreeGrafter"/>
</dbReference>
<dbReference type="Gene3D" id="3.40.1740.10">
    <property type="entry name" value="VC0467-like"/>
    <property type="match status" value="1"/>
</dbReference>
<dbReference type="HAMAP" id="MF_00758">
    <property type="entry name" value="UPF0301"/>
    <property type="match status" value="1"/>
</dbReference>
<dbReference type="InterPro" id="IPR003774">
    <property type="entry name" value="AlgH-like"/>
</dbReference>
<dbReference type="NCBIfam" id="NF001266">
    <property type="entry name" value="PRK00228.1-1"/>
    <property type="match status" value="1"/>
</dbReference>
<dbReference type="PANTHER" id="PTHR30327">
    <property type="entry name" value="UNCHARACTERIZED PROTEIN YQGE"/>
    <property type="match status" value="1"/>
</dbReference>
<dbReference type="PANTHER" id="PTHR30327:SF1">
    <property type="entry name" value="UPF0301 PROTEIN YQGE"/>
    <property type="match status" value="1"/>
</dbReference>
<dbReference type="Pfam" id="PF02622">
    <property type="entry name" value="DUF179"/>
    <property type="match status" value="1"/>
</dbReference>
<dbReference type="SUPFAM" id="SSF143456">
    <property type="entry name" value="VC0467-like"/>
    <property type="match status" value="1"/>
</dbReference>
<reference key="1">
    <citation type="journal article" date="2004" name="Proc. Natl. Acad. Sci. U.S.A.">
        <title>Genome sequence of the deep-sea gamma-proteobacterium Idiomarina loihiensis reveals amino acid fermentation as a source of carbon and energy.</title>
        <authorList>
            <person name="Hou S."/>
            <person name="Saw J.H."/>
            <person name="Lee K.S."/>
            <person name="Freitas T.A."/>
            <person name="Belisle C."/>
            <person name="Kawarabayasi Y."/>
            <person name="Donachie S.P."/>
            <person name="Pikina A."/>
            <person name="Galperin M.Y."/>
            <person name="Koonin E.V."/>
            <person name="Makarova K.S."/>
            <person name="Omelchenko M.V."/>
            <person name="Sorokin A."/>
            <person name="Wolf Y.I."/>
            <person name="Li Q.X."/>
            <person name="Keum Y.S."/>
            <person name="Campbell S."/>
            <person name="Denery J."/>
            <person name="Aizawa S."/>
            <person name="Shibata S."/>
            <person name="Malahoff A."/>
            <person name="Alam M."/>
        </authorList>
    </citation>
    <scope>NUCLEOTIDE SEQUENCE [LARGE SCALE GENOMIC DNA]</scope>
    <source>
        <strain>ATCC BAA-735 / DSM 15497 / L2-TR</strain>
    </source>
</reference>
<name>Y2218_IDILO</name>